<evidence type="ECO:0000255" key="1">
    <source>
        <dbReference type="HAMAP-Rule" id="MF_01351"/>
    </source>
</evidence>
<dbReference type="EC" id="7.1.1.-" evidence="1"/>
<dbReference type="EMBL" id="CP000580">
    <property type="protein sequence ID" value="ABN97340.1"/>
    <property type="molecule type" value="Genomic_DNA"/>
</dbReference>
<dbReference type="SMR" id="A3PWR3"/>
<dbReference type="KEGG" id="mjl:Mjls_1542"/>
<dbReference type="HOGENOM" id="CLU_067218_4_0_11"/>
<dbReference type="BioCyc" id="MSP164757:G1G8C-1559-MONOMER"/>
<dbReference type="GO" id="GO:0005886">
    <property type="term" value="C:plasma membrane"/>
    <property type="evidence" value="ECO:0007669"/>
    <property type="project" value="UniProtKB-SubCell"/>
</dbReference>
<dbReference type="GO" id="GO:0051539">
    <property type="term" value="F:4 iron, 4 sulfur cluster binding"/>
    <property type="evidence" value="ECO:0007669"/>
    <property type="project" value="UniProtKB-KW"/>
</dbReference>
<dbReference type="GO" id="GO:0005506">
    <property type="term" value="F:iron ion binding"/>
    <property type="evidence" value="ECO:0007669"/>
    <property type="project" value="UniProtKB-UniRule"/>
</dbReference>
<dbReference type="GO" id="GO:0050136">
    <property type="term" value="F:NADH:ubiquinone reductase (non-electrogenic) activity"/>
    <property type="evidence" value="ECO:0007669"/>
    <property type="project" value="UniProtKB-UniRule"/>
</dbReference>
<dbReference type="GO" id="GO:0048038">
    <property type="term" value="F:quinone binding"/>
    <property type="evidence" value="ECO:0007669"/>
    <property type="project" value="UniProtKB-KW"/>
</dbReference>
<dbReference type="GO" id="GO:0009060">
    <property type="term" value="P:aerobic respiration"/>
    <property type="evidence" value="ECO:0007669"/>
    <property type="project" value="TreeGrafter"/>
</dbReference>
<dbReference type="FunFam" id="3.30.70.3270:FF:000007">
    <property type="entry name" value="NADH-quinone oxidoreductase subunit I"/>
    <property type="match status" value="1"/>
</dbReference>
<dbReference type="Gene3D" id="3.30.70.3270">
    <property type="match status" value="1"/>
</dbReference>
<dbReference type="HAMAP" id="MF_01351">
    <property type="entry name" value="NDH1_NuoI"/>
    <property type="match status" value="1"/>
</dbReference>
<dbReference type="InterPro" id="IPR017896">
    <property type="entry name" value="4Fe4S_Fe-S-bd"/>
</dbReference>
<dbReference type="InterPro" id="IPR017900">
    <property type="entry name" value="4Fe4S_Fe_S_CS"/>
</dbReference>
<dbReference type="InterPro" id="IPR010226">
    <property type="entry name" value="NADH_quinone_OxRdtase_chainI"/>
</dbReference>
<dbReference type="NCBIfam" id="TIGR01971">
    <property type="entry name" value="NuoI"/>
    <property type="match status" value="1"/>
</dbReference>
<dbReference type="NCBIfam" id="NF004537">
    <property type="entry name" value="PRK05888.1-3"/>
    <property type="match status" value="1"/>
</dbReference>
<dbReference type="PANTHER" id="PTHR10849:SF20">
    <property type="entry name" value="NADH DEHYDROGENASE [UBIQUINONE] IRON-SULFUR PROTEIN 8, MITOCHONDRIAL"/>
    <property type="match status" value="1"/>
</dbReference>
<dbReference type="PANTHER" id="PTHR10849">
    <property type="entry name" value="NADH DEHYDROGENASE UBIQUINONE IRON-SULFUR PROTEIN 8, MITOCHONDRIAL"/>
    <property type="match status" value="1"/>
</dbReference>
<dbReference type="Pfam" id="PF12838">
    <property type="entry name" value="Fer4_7"/>
    <property type="match status" value="1"/>
</dbReference>
<dbReference type="SUPFAM" id="SSF54862">
    <property type="entry name" value="4Fe-4S ferredoxins"/>
    <property type="match status" value="1"/>
</dbReference>
<dbReference type="PROSITE" id="PS00198">
    <property type="entry name" value="4FE4S_FER_1"/>
    <property type="match status" value="2"/>
</dbReference>
<dbReference type="PROSITE" id="PS51379">
    <property type="entry name" value="4FE4S_FER_2"/>
    <property type="match status" value="2"/>
</dbReference>
<keyword id="KW-0004">4Fe-4S</keyword>
<keyword id="KW-1003">Cell membrane</keyword>
<keyword id="KW-0408">Iron</keyword>
<keyword id="KW-0411">Iron-sulfur</keyword>
<keyword id="KW-0472">Membrane</keyword>
<keyword id="KW-0479">Metal-binding</keyword>
<keyword id="KW-0520">NAD</keyword>
<keyword id="KW-0874">Quinone</keyword>
<keyword id="KW-0677">Repeat</keyword>
<keyword id="KW-1278">Translocase</keyword>
<comment type="function">
    <text evidence="1">NDH-1 shuttles electrons from NADH, via FMN and iron-sulfur (Fe-S) centers, to quinones in the respiratory chain. The immediate electron acceptor for the enzyme in this species is believed to be menaquinone. Couples the redox reaction to proton translocation (for every two electrons transferred, four hydrogen ions are translocated across the cytoplasmic membrane), and thus conserves the redox energy in a proton gradient.</text>
</comment>
<comment type="catalytic activity">
    <reaction evidence="1">
        <text>a quinone + NADH + 5 H(+)(in) = a quinol + NAD(+) + 4 H(+)(out)</text>
        <dbReference type="Rhea" id="RHEA:57888"/>
        <dbReference type="ChEBI" id="CHEBI:15378"/>
        <dbReference type="ChEBI" id="CHEBI:24646"/>
        <dbReference type="ChEBI" id="CHEBI:57540"/>
        <dbReference type="ChEBI" id="CHEBI:57945"/>
        <dbReference type="ChEBI" id="CHEBI:132124"/>
    </reaction>
</comment>
<comment type="cofactor">
    <cofactor evidence="1">
        <name>[4Fe-4S] cluster</name>
        <dbReference type="ChEBI" id="CHEBI:49883"/>
    </cofactor>
    <text evidence="1">Binds 2 [4Fe-4S] clusters per subunit.</text>
</comment>
<comment type="subunit">
    <text evidence="1">NDH-1 is composed of 14 different subunits. Subunits NuoA, H, J, K, L, M, N constitute the membrane sector of the complex.</text>
</comment>
<comment type="subcellular location">
    <subcellularLocation>
        <location evidence="1">Cell membrane</location>
        <topology evidence="1">Peripheral membrane protein</topology>
    </subcellularLocation>
</comment>
<comment type="similarity">
    <text evidence="1">Belongs to the complex I 23 kDa subunit family.</text>
</comment>
<accession>A3PWR3</accession>
<proteinExistence type="inferred from homology"/>
<protein>
    <recommendedName>
        <fullName evidence="1">NADH-quinone oxidoreductase subunit I</fullName>
        <ecNumber evidence="1">7.1.1.-</ecNumber>
    </recommendedName>
    <alternativeName>
        <fullName evidence="1">NADH dehydrogenase I subunit I</fullName>
    </alternativeName>
    <alternativeName>
        <fullName evidence="1">NDH-1 subunit I</fullName>
    </alternativeName>
</protein>
<name>NUOI_MYCSJ</name>
<feature type="chain" id="PRO_0000298515" description="NADH-quinone oxidoreductase subunit I">
    <location>
        <begin position="1"/>
        <end position="174"/>
    </location>
</feature>
<feature type="domain" description="4Fe-4S ferredoxin-type 1" evidence="1">
    <location>
        <begin position="44"/>
        <end position="74"/>
    </location>
</feature>
<feature type="domain" description="4Fe-4S ferredoxin-type 2" evidence="1">
    <location>
        <begin position="90"/>
        <end position="119"/>
    </location>
</feature>
<feature type="binding site" evidence="1">
    <location>
        <position position="54"/>
    </location>
    <ligand>
        <name>[4Fe-4S] cluster</name>
        <dbReference type="ChEBI" id="CHEBI:49883"/>
        <label>1</label>
    </ligand>
</feature>
<feature type="binding site" evidence="1">
    <location>
        <position position="57"/>
    </location>
    <ligand>
        <name>[4Fe-4S] cluster</name>
        <dbReference type="ChEBI" id="CHEBI:49883"/>
        <label>1</label>
    </ligand>
</feature>
<feature type="binding site" evidence="1">
    <location>
        <position position="60"/>
    </location>
    <ligand>
        <name>[4Fe-4S] cluster</name>
        <dbReference type="ChEBI" id="CHEBI:49883"/>
        <label>1</label>
    </ligand>
</feature>
<feature type="binding site" evidence="1">
    <location>
        <position position="64"/>
    </location>
    <ligand>
        <name>[4Fe-4S] cluster</name>
        <dbReference type="ChEBI" id="CHEBI:49883"/>
        <label>2</label>
    </ligand>
</feature>
<feature type="binding site" evidence="1">
    <location>
        <position position="99"/>
    </location>
    <ligand>
        <name>[4Fe-4S] cluster</name>
        <dbReference type="ChEBI" id="CHEBI:49883"/>
        <label>2</label>
    </ligand>
</feature>
<feature type="binding site" evidence="1">
    <location>
        <position position="102"/>
    </location>
    <ligand>
        <name>[4Fe-4S] cluster</name>
        <dbReference type="ChEBI" id="CHEBI:49883"/>
        <label>2</label>
    </ligand>
</feature>
<feature type="binding site" evidence="1">
    <location>
        <position position="105"/>
    </location>
    <ligand>
        <name>[4Fe-4S] cluster</name>
        <dbReference type="ChEBI" id="CHEBI:49883"/>
        <label>2</label>
    </ligand>
</feature>
<feature type="binding site" evidence="1">
    <location>
        <position position="109"/>
    </location>
    <ligand>
        <name>[4Fe-4S] cluster</name>
        <dbReference type="ChEBI" id="CHEBI:49883"/>
        <label>1</label>
    </ligand>
</feature>
<gene>
    <name evidence="1" type="primary">nuoI</name>
    <name type="ordered locus">Mjls_1542</name>
</gene>
<reference key="1">
    <citation type="submission" date="2007-02" db="EMBL/GenBank/DDBJ databases">
        <title>Complete sequence of Mycobacterium sp. JLS.</title>
        <authorList>
            <consortium name="US DOE Joint Genome Institute"/>
            <person name="Copeland A."/>
            <person name="Lucas S."/>
            <person name="Lapidus A."/>
            <person name="Barry K."/>
            <person name="Detter J.C."/>
            <person name="Glavina del Rio T."/>
            <person name="Hammon N."/>
            <person name="Israni S."/>
            <person name="Dalin E."/>
            <person name="Tice H."/>
            <person name="Pitluck S."/>
            <person name="Chain P."/>
            <person name="Malfatti S."/>
            <person name="Shin M."/>
            <person name="Vergez L."/>
            <person name="Schmutz J."/>
            <person name="Larimer F."/>
            <person name="Land M."/>
            <person name="Hauser L."/>
            <person name="Kyrpides N."/>
            <person name="Mikhailova N."/>
            <person name="Miller C.D."/>
            <person name="Anderson A.J."/>
            <person name="Sims R.C."/>
            <person name="Richardson P."/>
        </authorList>
    </citation>
    <scope>NUCLEOTIDE SEQUENCE [LARGE SCALE GENOMIC DNA]</scope>
    <source>
        <strain>JLS</strain>
    </source>
</reference>
<organism>
    <name type="scientific">Mycobacterium sp. (strain JLS)</name>
    <dbReference type="NCBI Taxonomy" id="164757"/>
    <lineage>
        <taxon>Bacteria</taxon>
        <taxon>Bacillati</taxon>
        <taxon>Actinomycetota</taxon>
        <taxon>Actinomycetes</taxon>
        <taxon>Mycobacteriales</taxon>
        <taxon>Mycobacteriaceae</taxon>
        <taxon>Mycobacterium</taxon>
    </lineage>
</organism>
<sequence length="174" mass="19393">MPKLWDAVAGFAVTFGTLFKKPITEEYPEKPGPVAPRYHGRHQLNRYPDGLEKCIGCELCAWACPADAIYVEGDDNTADERYSPGERYGRVYQINYLRCIGCGLCIEACPTRALTMTNDYEMADDNRADLIWGKDKLLAPLQDGMLAPPHPMAPGATDDDYYLGRIGPVTEDVR</sequence>